<protein>
    <recommendedName>
        <fullName>Rac guanine nucleotide exchange factor JJ</fullName>
        <shortName>RacGEF JJ</shortName>
    </recommendedName>
</protein>
<comment type="function">
    <text evidence="1">GTPase-activating protein.</text>
</comment>
<name>GXCJJ_DICDI</name>
<organism>
    <name type="scientific">Dictyostelium discoideum</name>
    <name type="common">Social amoeba</name>
    <dbReference type="NCBI Taxonomy" id="44689"/>
    <lineage>
        <taxon>Eukaryota</taxon>
        <taxon>Amoebozoa</taxon>
        <taxon>Evosea</taxon>
        <taxon>Eumycetozoa</taxon>
        <taxon>Dictyostelia</taxon>
        <taxon>Dictyosteliales</taxon>
        <taxon>Dictyosteliaceae</taxon>
        <taxon>Dictyostelium</taxon>
    </lineage>
</organism>
<reference key="1">
    <citation type="journal article" date="2002" name="Nature">
        <title>Sequence and analysis of chromosome 2 of Dictyostelium discoideum.</title>
        <authorList>
            <person name="Gloeckner G."/>
            <person name="Eichinger L."/>
            <person name="Szafranski K."/>
            <person name="Pachebat J.A."/>
            <person name="Bankier A.T."/>
            <person name="Dear P.H."/>
            <person name="Lehmann R."/>
            <person name="Baumgart C."/>
            <person name="Parra G."/>
            <person name="Abril J.F."/>
            <person name="Guigo R."/>
            <person name="Kumpf K."/>
            <person name="Tunggal B."/>
            <person name="Cox E.C."/>
            <person name="Quail M.A."/>
            <person name="Platzer M."/>
            <person name="Rosenthal A."/>
            <person name="Noegel A.A."/>
        </authorList>
    </citation>
    <scope>NUCLEOTIDE SEQUENCE [LARGE SCALE GENOMIC DNA]</scope>
    <source>
        <strain>AX4</strain>
    </source>
</reference>
<reference key="2">
    <citation type="journal article" date="2005" name="Nature">
        <title>The genome of the social amoeba Dictyostelium discoideum.</title>
        <authorList>
            <person name="Eichinger L."/>
            <person name="Pachebat J.A."/>
            <person name="Gloeckner G."/>
            <person name="Rajandream M.A."/>
            <person name="Sucgang R."/>
            <person name="Berriman M."/>
            <person name="Song J."/>
            <person name="Olsen R."/>
            <person name="Szafranski K."/>
            <person name="Xu Q."/>
            <person name="Tunggal B."/>
            <person name="Kummerfeld S."/>
            <person name="Madera M."/>
            <person name="Konfortov B.A."/>
            <person name="Rivero F."/>
            <person name="Bankier A.T."/>
            <person name="Lehmann R."/>
            <person name="Hamlin N."/>
            <person name="Davies R."/>
            <person name="Gaudet P."/>
            <person name="Fey P."/>
            <person name="Pilcher K."/>
            <person name="Chen G."/>
            <person name="Saunders D."/>
            <person name="Sodergren E.J."/>
            <person name="Davis P."/>
            <person name="Kerhornou A."/>
            <person name="Nie X."/>
            <person name="Hall N."/>
            <person name="Anjard C."/>
            <person name="Hemphill L."/>
            <person name="Bason N."/>
            <person name="Farbrother P."/>
            <person name="Desany B."/>
            <person name="Just E."/>
            <person name="Morio T."/>
            <person name="Rost R."/>
            <person name="Churcher C.M."/>
            <person name="Cooper J."/>
            <person name="Haydock S."/>
            <person name="van Driessche N."/>
            <person name="Cronin A."/>
            <person name="Goodhead I."/>
            <person name="Muzny D.M."/>
            <person name="Mourier T."/>
            <person name="Pain A."/>
            <person name="Lu M."/>
            <person name="Harper D."/>
            <person name="Lindsay R."/>
            <person name="Hauser H."/>
            <person name="James K.D."/>
            <person name="Quiles M."/>
            <person name="Madan Babu M."/>
            <person name="Saito T."/>
            <person name="Buchrieser C."/>
            <person name="Wardroper A."/>
            <person name="Felder M."/>
            <person name="Thangavelu M."/>
            <person name="Johnson D."/>
            <person name="Knights A."/>
            <person name="Loulseged H."/>
            <person name="Mungall K.L."/>
            <person name="Oliver K."/>
            <person name="Price C."/>
            <person name="Quail M.A."/>
            <person name="Urushihara H."/>
            <person name="Hernandez J."/>
            <person name="Rabbinowitsch E."/>
            <person name="Steffen D."/>
            <person name="Sanders M."/>
            <person name="Ma J."/>
            <person name="Kohara Y."/>
            <person name="Sharp S."/>
            <person name="Simmonds M.N."/>
            <person name="Spiegler S."/>
            <person name="Tivey A."/>
            <person name="Sugano S."/>
            <person name="White B."/>
            <person name="Walker D."/>
            <person name="Woodward J.R."/>
            <person name="Winckler T."/>
            <person name="Tanaka Y."/>
            <person name="Shaulsky G."/>
            <person name="Schleicher M."/>
            <person name="Weinstock G.M."/>
            <person name="Rosenthal A."/>
            <person name="Cox E.C."/>
            <person name="Chisholm R.L."/>
            <person name="Gibbs R.A."/>
            <person name="Loomis W.F."/>
            <person name="Platzer M."/>
            <person name="Kay R.R."/>
            <person name="Williams J.G."/>
            <person name="Dear P.H."/>
            <person name="Noegel A.A."/>
            <person name="Barrell B.G."/>
            <person name="Kuspa A."/>
        </authorList>
    </citation>
    <scope>NUCLEOTIDE SEQUENCE [LARGE SCALE GENOMIC DNA]</scope>
    <source>
        <strain>AX4</strain>
    </source>
</reference>
<reference key="3">
    <citation type="submission" date="2008-10" db="UniProtKB">
        <authorList>
            <person name="Bienvenut W.V."/>
            <person name="Sumpton D."/>
            <person name="Ura S."/>
            <person name="Insall R.H."/>
        </authorList>
    </citation>
    <scope>PROTEIN SEQUENCE OF 517-524; 570-576; 587-596; 668-688; 821-834; 857-868; 887-902; 960-974; 978-983; 1026-1034 AND 1088-1095</scope>
    <scope>IDENTIFICATION BY MASS SPECTROMETRY</scope>
    <source>
        <strain>AX2</strain>
    </source>
</reference>
<accession>Q553D3</accession>
<dbReference type="EMBL" id="AAFI02000013">
    <property type="protein sequence ID" value="EAL69590.1"/>
    <property type="molecule type" value="Genomic_DNA"/>
</dbReference>
<dbReference type="RefSeq" id="XP_643485.1">
    <property type="nucleotide sequence ID" value="XM_638393.1"/>
</dbReference>
<dbReference type="SMR" id="Q553D3"/>
<dbReference type="FunCoup" id="Q553D3">
    <property type="interactions" value="435"/>
</dbReference>
<dbReference type="STRING" id="44689.Q553D3"/>
<dbReference type="GlyGen" id="Q553D3">
    <property type="glycosylation" value="2 sites"/>
</dbReference>
<dbReference type="PaxDb" id="44689-DDB0233356"/>
<dbReference type="EnsemblProtists" id="EAL69590">
    <property type="protein sequence ID" value="EAL69590"/>
    <property type="gene ID" value="DDB_G0275679"/>
</dbReference>
<dbReference type="GeneID" id="8620066"/>
<dbReference type="KEGG" id="ddi:DDB_G0275679"/>
<dbReference type="dictyBase" id="DDB_G0275679">
    <property type="gene designation" value="gxcJJ"/>
</dbReference>
<dbReference type="VEuPathDB" id="AmoebaDB:DDB_G0275679"/>
<dbReference type="eggNOG" id="KOG4424">
    <property type="taxonomic scope" value="Eukaryota"/>
</dbReference>
<dbReference type="HOGENOM" id="CLU_273902_0_0_1"/>
<dbReference type="InParanoid" id="Q553D3"/>
<dbReference type="OMA" id="YFIPMEV"/>
<dbReference type="PhylomeDB" id="Q553D3"/>
<dbReference type="PRO" id="PR:Q553D3"/>
<dbReference type="Proteomes" id="UP000002195">
    <property type="component" value="Chromosome 2"/>
</dbReference>
<dbReference type="GO" id="GO:0005737">
    <property type="term" value="C:cytoplasm"/>
    <property type="evidence" value="ECO:0000318"/>
    <property type="project" value="GO_Central"/>
</dbReference>
<dbReference type="GO" id="GO:0005085">
    <property type="term" value="F:guanyl-nucleotide exchange factor activity"/>
    <property type="evidence" value="ECO:0000318"/>
    <property type="project" value="GO_Central"/>
</dbReference>
<dbReference type="CDD" id="cd00160">
    <property type="entry name" value="RhoGEF"/>
    <property type="match status" value="1"/>
</dbReference>
<dbReference type="Gene3D" id="1.20.900.10">
    <property type="entry name" value="Dbl homology (DH) domain"/>
    <property type="match status" value="1"/>
</dbReference>
<dbReference type="Gene3D" id="2.30.29.30">
    <property type="entry name" value="Pleckstrin-homology domain (PH domain)/Phosphotyrosine-binding domain (PTB)"/>
    <property type="match status" value="1"/>
</dbReference>
<dbReference type="InterPro" id="IPR035899">
    <property type="entry name" value="DBL_dom_sf"/>
</dbReference>
<dbReference type="InterPro" id="IPR000219">
    <property type="entry name" value="DH_dom"/>
</dbReference>
<dbReference type="InterPro" id="IPR051092">
    <property type="entry name" value="FYVE_RhoGEF_PH"/>
</dbReference>
<dbReference type="InterPro" id="IPR011993">
    <property type="entry name" value="PH-like_dom_sf"/>
</dbReference>
<dbReference type="InterPro" id="IPR001849">
    <property type="entry name" value="PH_domain"/>
</dbReference>
<dbReference type="PANTHER" id="PTHR12673">
    <property type="entry name" value="FACIOGENITAL DYSPLASIA PROTEIN"/>
    <property type="match status" value="1"/>
</dbReference>
<dbReference type="PANTHER" id="PTHR12673:SF252">
    <property type="entry name" value="RAC GUANINE NUCLEOTIDE EXCHANGE FACTOR JJ"/>
    <property type="match status" value="1"/>
</dbReference>
<dbReference type="Pfam" id="PF00621">
    <property type="entry name" value="RhoGEF"/>
    <property type="match status" value="1"/>
</dbReference>
<dbReference type="SMART" id="SM00233">
    <property type="entry name" value="PH"/>
    <property type="match status" value="1"/>
</dbReference>
<dbReference type="SMART" id="SM00325">
    <property type="entry name" value="RhoGEF"/>
    <property type="match status" value="1"/>
</dbReference>
<dbReference type="SUPFAM" id="SSF48065">
    <property type="entry name" value="DBL homology domain (DH-domain)"/>
    <property type="match status" value="1"/>
</dbReference>
<dbReference type="SUPFAM" id="SSF50729">
    <property type="entry name" value="PH domain-like"/>
    <property type="match status" value="1"/>
</dbReference>
<dbReference type="PROSITE" id="PS50010">
    <property type="entry name" value="DH_2"/>
    <property type="match status" value="1"/>
</dbReference>
<dbReference type="PROSITE" id="PS50096">
    <property type="entry name" value="IQ"/>
    <property type="match status" value="1"/>
</dbReference>
<gene>
    <name type="primary">gxcJJ</name>
    <name type="ORF">DDB_G0275679</name>
</gene>
<sequence>MSYEYYYQQQQQQQQQQQQQQQQPTFDYASYYDNQQQQHPQPQYPVYDHTAQSNDSQQQHYGSSYVDPTYATTSTTQQQQQQPSIYDYNTGGNRNSGQYDQYNTTNTTTPNTTQNYDYSNTSGNRNSGQYDQYTTTNTTSANTYGYDNSKTHSPTPSSYDYSTNSYYSQQQQQQPTPTVAATNNTTNTSTNYDSYYQPPAQRNSYDYSQTQQQHSPTSSYDYSQVTNNTATNYDSYYQQPTTPTSTSSSSSTTTTTTTDNQSKFEKSQSLKNMDHFIKGTPSNTPSATINSWDYNQQQPQPQQPQSVYNNPSSSTTNTTYNNPSTTTTTSSPTNTNTTYNNPSSATNTNYNNRNSWGYDQSTYNNSSYNNNTDTYSNQTQQQEYQVLYDKKYQEEEEKRRKEYEESWRVYYEQQAAYEKEQERIRNEEMEKIRIKHEEESNRLKNELEKQRDEIQKMKDQLVQQQNASKKKGEEDLKQMEQAKQAALQWQQEEMKRQLIEVQKERDLSRKHEEQVRLALLEEQRVIKEKLDEKQQQLISQQQAFQSKLHQDECSRKVEEEKKCEEMKKREFELLERNKELDALKSKLQSDLTTSLKSKEDLENQRKALEETTLREKKEIQIYKQSIDEETKRKKLEIEQARQQEEKKLKEQQDHINRQKEMVDCQQRELLVQINQSKQATIDSLQPMRNMLSTLNINNKNSPASNIALKNKDDQNINDNLPQQKPVIPSRNSSHLPKLSPTIQQPQPQQEQPPQQQQQQQQQQQQQQQQQQPVKIVKTYTQKELDQIVDGNYRFGDIIRVQRVSRKWLARKKFKDLVKMKLLSNDPETENMRNRFKSVNELYSTELSYLNSLLILRDFYFIPMEVEARVTKLFKSEEINKVFSNLKSILQISTEITHLLEERLSVSPVKIGDIFVKFAPIFKIYVEYVNNFDKVAPQLKAMTENPQSKKFFSEQRNKSRVATDINSLLIMPVQRCPRYELLLREILKHTQEDHVEFKNIKSAYESIKDINKYINDRKRNVDNRAKLLELQKEIKNAPELIESHRYFVRESQCNISANKKSESGGFYLFFFNDMVLVTKKSSLFSNYKYVYTIPLKNADIKDISSNDSMIRIIVGSLESIDVLIYTISLPSKKDKESWLQDLSVELKPKGIEIGQYSSSQLLESQVQFSNSKTK</sequence>
<evidence type="ECO:0000250" key="1"/>
<evidence type="ECO:0000255" key="2">
    <source>
        <dbReference type="PROSITE-ProRule" id="PRU00062"/>
    </source>
</evidence>
<evidence type="ECO:0000255" key="3">
    <source>
        <dbReference type="PROSITE-ProRule" id="PRU00116"/>
    </source>
</evidence>
<evidence type="ECO:0000256" key="4">
    <source>
        <dbReference type="SAM" id="MobiDB-lite"/>
    </source>
</evidence>
<keyword id="KW-0903">Direct protein sequencing</keyword>
<keyword id="KW-0344">Guanine-nucleotide releasing factor</keyword>
<keyword id="KW-1185">Reference proteome</keyword>
<proteinExistence type="evidence at protein level"/>
<feature type="chain" id="PRO_0000388367" description="Rac guanine nucleotide exchange factor JJ">
    <location>
        <begin position="1"/>
        <end position="1173"/>
    </location>
</feature>
<feature type="domain" description="IQ" evidence="3">
    <location>
        <begin position="793"/>
        <end position="822"/>
    </location>
</feature>
<feature type="domain" description="DH" evidence="2">
    <location>
        <begin position="833"/>
        <end position="1016"/>
    </location>
</feature>
<feature type="domain" description="PH">
    <location>
        <begin position="1044"/>
        <end position="1146"/>
    </location>
</feature>
<feature type="region of interest" description="Disordered" evidence="4">
    <location>
        <begin position="1"/>
        <end position="380"/>
    </location>
</feature>
<feature type="region of interest" description="Disordered" evidence="4">
    <location>
        <begin position="458"/>
        <end position="479"/>
    </location>
</feature>
<feature type="region of interest" description="Disordered" evidence="4">
    <location>
        <begin position="712"/>
        <end position="765"/>
    </location>
</feature>
<feature type="compositionally biased region" description="Low complexity" evidence="4">
    <location>
        <begin position="8"/>
        <end position="23"/>
    </location>
</feature>
<feature type="compositionally biased region" description="Low complexity" evidence="4">
    <location>
        <begin position="35"/>
        <end position="45"/>
    </location>
</feature>
<feature type="compositionally biased region" description="Polar residues" evidence="4">
    <location>
        <begin position="50"/>
        <end position="62"/>
    </location>
</feature>
<feature type="compositionally biased region" description="Low complexity" evidence="4">
    <location>
        <begin position="72"/>
        <end position="82"/>
    </location>
</feature>
<feature type="compositionally biased region" description="Low complexity" evidence="4">
    <location>
        <begin position="98"/>
        <end position="118"/>
    </location>
</feature>
<feature type="compositionally biased region" description="Polar residues" evidence="4">
    <location>
        <begin position="119"/>
        <end position="133"/>
    </location>
</feature>
<feature type="compositionally biased region" description="Low complexity" evidence="4">
    <location>
        <begin position="134"/>
        <end position="143"/>
    </location>
</feature>
<feature type="compositionally biased region" description="Low complexity" evidence="4">
    <location>
        <begin position="153"/>
        <end position="191"/>
    </location>
</feature>
<feature type="compositionally biased region" description="Low complexity" evidence="4">
    <location>
        <begin position="208"/>
        <end position="219"/>
    </location>
</feature>
<feature type="compositionally biased region" description="Polar residues" evidence="4">
    <location>
        <begin position="220"/>
        <end position="239"/>
    </location>
</feature>
<feature type="compositionally biased region" description="Low complexity" evidence="4">
    <location>
        <begin position="240"/>
        <end position="258"/>
    </location>
</feature>
<feature type="compositionally biased region" description="Basic and acidic residues" evidence="4">
    <location>
        <begin position="262"/>
        <end position="277"/>
    </location>
</feature>
<feature type="compositionally biased region" description="Polar residues" evidence="4">
    <location>
        <begin position="280"/>
        <end position="295"/>
    </location>
</feature>
<feature type="compositionally biased region" description="Low complexity" evidence="4">
    <location>
        <begin position="296"/>
        <end position="380"/>
    </location>
</feature>
<feature type="compositionally biased region" description="Basic and acidic residues" evidence="4">
    <location>
        <begin position="470"/>
        <end position="479"/>
    </location>
</feature>
<feature type="compositionally biased region" description="Low complexity" evidence="4">
    <location>
        <begin position="743"/>
        <end position="765"/>
    </location>
</feature>